<protein>
    <recommendedName>
        <fullName evidence="1">3-ketoacyl-CoA thiolase</fullName>
        <ecNumber evidence="1">2.3.1.16</ecNumber>
    </recommendedName>
    <alternativeName>
        <fullName evidence="1">ACSs</fullName>
    </alternativeName>
    <alternativeName>
        <fullName evidence="1">Acetyl-CoA acyltransferase</fullName>
    </alternativeName>
    <alternativeName>
        <fullName evidence="1">Acyl-CoA ligase</fullName>
    </alternativeName>
    <alternativeName>
        <fullName evidence="1">Beta-ketothiolase</fullName>
    </alternativeName>
    <alternativeName>
        <fullName evidence="1">Fatty acid oxidation complex subunit beta</fullName>
    </alternativeName>
</protein>
<name>FADI_ECOL5</name>
<keyword id="KW-0012">Acyltransferase</keyword>
<keyword id="KW-0963">Cytoplasm</keyword>
<keyword id="KW-0276">Fatty acid metabolism</keyword>
<keyword id="KW-0442">Lipid degradation</keyword>
<keyword id="KW-0443">Lipid metabolism</keyword>
<keyword id="KW-0808">Transferase</keyword>
<dbReference type="EC" id="2.3.1.16" evidence="1"/>
<dbReference type="EMBL" id="CP000247">
    <property type="protein sequence ID" value="ABG70374.1"/>
    <property type="molecule type" value="Genomic_DNA"/>
</dbReference>
<dbReference type="RefSeq" id="WP_000531977.1">
    <property type="nucleotide sequence ID" value="NC_008253.1"/>
</dbReference>
<dbReference type="SMR" id="Q0TFA5"/>
<dbReference type="KEGG" id="ecp:ECP_2380"/>
<dbReference type="HOGENOM" id="CLU_031026_2_0_6"/>
<dbReference type="UniPathway" id="UPA00659"/>
<dbReference type="Proteomes" id="UP000009182">
    <property type="component" value="Chromosome"/>
</dbReference>
<dbReference type="GO" id="GO:0005829">
    <property type="term" value="C:cytosol"/>
    <property type="evidence" value="ECO:0007669"/>
    <property type="project" value="TreeGrafter"/>
</dbReference>
<dbReference type="GO" id="GO:0003988">
    <property type="term" value="F:acetyl-CoA C-acyltransferase activity"/>
    <property type="evidence" value="ECO:0007669"/>
    <property type="project" value="UniProtKB-UniRule"/>
</dbReference>
<dbReference type="GO" id="GO:0006635">
    <property type="term" value="P:fatty acid beta-oxidation"/>
    <property type="evidence" value="ECO:0007669"/>
    <property type="project" value="UniProtKB-UniRule"/>
</dbReference>
<dbReference type="CDD" id="cd00751">
    <property type="entry name" value="thiolase"/>
    <property type="match status" value="1"/>
</dbReference>
<dbReference type="FunFam" id="3.40.47.10:FF:000011">
    <property type="entry name" value="3-ketoacyl-CoA thiolase"/>
    <property type="match status" value="1"/>
</dbReference>
<dbReference type="Gene3D" id="3.40.47.10">
    <property type="match status" value="1"/>
</dbReference>
<dbReference type="HAMAP" id="MF_01618">
    <property type="entry name" value="FadI"/>
    <property type="match status" value="1"/>
</dbReference>
<dbReference type="InterPro" id="IPR012806">
    <property type="entry name" value="Ac-CoA_C-AcTrfase_FadI"/>
</dbReference>
<dbReference type="InterPro" id="IPR002155">
    <property type="entry name" value="Thiolase"/>
</dbReference>
<dbReference type="InterPro" id="IPR016039">
    <property type="entry name" value="Thiolase-like"/>
</dbReference>
<dbReference type="InterPro" id="IPR020615">
    <property type="entry name" value="Thiolase_acyl_enz_int_AS"/>
</dbReference>
<dbReference type="InterPro" id="IPR020610">
    <property type="entry name" value="Thiolase_AS"/>
</dbReference>
<dbReference type="InterPro" id="IPR020617">
    <property type="entry name" value="Thiolase_C"/>
</dbReference>
<dbReference type="InterPro" id="IPR020613">
    <property type="entry name" value="Thiolase_CS"/>
</dbReference>
<dbReference type="InterPro" id="IPR020616">
    <property type="entry name" value="Thiolase_N"/>
</dbReference>
<dbReference type="NCBIfam" id="TIGR01930">
    <property type="entry name" value="AcCoA-C-Actrans"/>
    <property type="match status" value="1"/>
</dbReference>
<dbReference type="NCBIfam" id="TIGR02446">
    <property type="entry name" value="FadI"/>
    <property type="match status" value="1"/>
</dbReference>
<dbReference type="NCBIfam" id="NF006516">
    <property type="entry name" value="PRK08963.1"/>
    <property type="match status" value="1"/>
</dbReference>
<dbReference type="PANTHER" id="PTHR18919:SF107">
    <property type="entry name" value="ACETYL-COA ACETYLTRANSFERASE, CYTOSOLIC"/>
    <property type="match status" value="1"/>
</dbReference>
<dbReference type="PANTHER" id="PTHR18919">
    <property type="entry name" value="ACETYL-COA C-ACYLTRANSFERASE"/>
    <property type="match status" value="1"/>
</dbReference>
<dbReference type="Pfam" id="PF02803">
    <property type="entry name" value="Thiolase_C"/>
    <property type="match status" value="1"/>
</dbReference>
<dbReference type="Pfam" id="PF00108">
    <property type="entry name" value="Thiolase_N"/>
    <property type="match status" value="1"/>
</dbReference>
<dbReference type="PIRSF" id="PIRSF000429">
    <property type="entry name" value="Ac-CoA_Ac_transf"/>
    <property type="match status" value="1"/>
</dbReference>
<dbReference type="SUPFAM" id="SSF53901">
    <property type="entry name" value="Thiolase-like"/>
    <property type="match status" value="2"/>
</dbReference>
<dbReference type="PROSITE" id="PS00098">
    <property type="entry name" value="THIOLASE_1"/>
    <property type="match status" value="1"/>
</dbReference>
<dbReference type="PROSITE" id="PS00737">
    <property type="entry name" value="THIOLASE_2"/>
    <property type="match status" value="1"/>
</dbReference>
<dbReference type="PROSITE" id="PS00099">
    <property type="entry name" value="THIOLASE_3"/>
    <property type="match status" value="1"/>
</dbReference>
<accession>Q0TFA5</accession>
<gene>
    <name evidence="1" type="primary">fadI</name>
    <name type="ordered locus">ECP_2380</name>
</gene>
<evidence type="ECO:0000255" key="1">
    <source>
        <dbReference type="HAMAP-Rule" id="MF_01618"/>
    </source>
</evidence>
<proteinExistence type="inferred from homology"/>
<sequence>MGQVLPLVTRQGDRIAIVSGLRTPFARQATAFHGIPAVDLGKMVVGELLARTEIPAEVIEQLVFGQVVQMPEAPNIAREIVLGTGMNVHTDAYSVSRACATSFQAVANVAESLMAGTIRAGIAGGADSSSVLPIGVSKKLARVLVDVNKARTMSQRLKLFSRLRLRDLMPVPPAVAEYSTGLRMGDTAEQMAKTYGITREQQDALAHRSHQRAAQAWSEGKLKEEVMTAFIPPYKQPLVEDNNIRGNSSLADYAKLRPAFDRKHGTVTAANSTPLTDGAAAVILMTESRAKELGLVPLGYLRSYAFTAIDVWQDMLLGPAWSTPLALERAGLTMGDLTLIDMHEAFAAQTLANIQLLGSERFARDVLGRAHATGEVDESKFNVLGGSIAYGHPFAATGARMITQTLHELRRRGGGFGLVTACAAGGLGAAMVLEAE</sequence>
<feature type="chain" id="PRO_1000069498" description="3-ketoacyl-CoA thiolase">
    <location>
        <begin position="1"/>
        <end position="436"/>
    </location>
</feature>
<feature type="active site" description="Acyl-thioester intermediate" evidence="1">
    <location>
        <position position="99"/>
    </location>
</feature>
<feature type="active site" description="Proton acceptor" evidence="1">
    <location>
        <position position="392"/>
    </location>
</feature>
<feature type="active site" description="Proton acceptor" evidence="1">
    <location>
        <position position="422"/>
    </location>
</feature>
<organism>
    <name type="scientific">Escherichia coli O6:K15:H31 (strain 536 / UPEC)</name>
    <dbReference type="NCBI Taxonomy" id="362663"/>
    <lineage>
        <taxon>Bacteria</taxon>
        <taxon>Pseudomonadati</taxon>
        <taxon>Pseudomonadota</taxon>
        <taxon>Gammaproteobacteria</taxon>
        <taxon>Enterobacterales</taxon>
        <taxon>Enterobacteriaceae</taxon>
        <taxon>Escherichia</taxon>
    </lineage>
</organism>
<reference key="1">
    <citation type="journal article" date="2006" name="Mol. Microbiol.">
        <title>Role of pathogenicity island-associated integrases in the genome plasticity of uropathogenic Escherichia coli strain 536.</title>
        <authorList>
            <person name="Hochhut B."/>
            <person name="Wilde C."/>
            <person name="Balling G."/>
            <person name="Middendorf B."/>
            <person name="Dobrindt U."/>
            <person name="Brzuszkiewicz E."/>
            <person name="Gottschalk G."/>
            <person name="Carniel E."/>
            <person name="Hacker J."/>
        </authorList>
    </citation>
    <scope>NUCLEOTIDE SEQUENCE [LARGE SCALE GENOMIC DNA]</scope>
    <source>
        <strain>536 / UPEC</strain>
    </source>
</reference>
<comment type="function">
    <text evidence="1">Catalyzes the final step of fatty acid oxidation in which acetyl-CoA is released and the CoA ester of a fatty acid two carbons shorter is formed.</text>
</comment>
<comment type="catalytic activity">
    <reaction evidence="1">
        <text>an acyl-CoA + acetyl-CoA = a 3-oxoacyl-CoA + CoA</text>
        <dbReference type="Rhea" id="RHEA:21564"/>
        <dbReference type="ChEBI" id="CHEBI:57287"/>
        <dbReference type="ChEBI" id="CHEBI:57288"/>
        <dbReference type="ChEBI" id="CHEBI:58342"/>
        <dbReference type="ChEBI" id="CHEBI:90726"/>
        <dbReference type="EC" id="2.3.1.16"/>
    </reaction>
</comment>
<comment type="pathway">
    <text evidence="1">Lipid metabolism; fatty acid beta-oxidation.</text>
</comment>
<comment type="subunit">
    <text evidence="1">Heterotetramer of two alpha chains (FadJ) and two beta chains (FadI).</text>
</comment>
<comment type="subcellular location">
    <subcellularLocation>
        <location evidence="1">Cytoplasm</location>
    </subcellularLocation>
</comment>
<comment type="similarity">
    <text evidence="1">Belongs to the thiolase-like superfamily. Thiolase family.</text>
</comment>